<reference key="1">
    <citation type="journal article" date="2009" name="PLoS Genet.">
        <title>Organised genome dynamics in the Escherichia coli species results in highly diverse adaptive paths.</title>
        <authorList>
            <person name="Touchon M."/>
            <person name="Hoede C."/>
            <person name="Tenaillon O."/>
            <person name="Barbe V."/>
            <person name="Baeriswyl S."/>
            <person name="Bidet P."/>
            <person name="Bingen E."/>
            <person name="Bonacorsi S."/>
            <person name="Bouchier C."/>
            <person name="Bouvet O."/>
            <person name="Calteau A."/>
            <person name="Chiapello H."/>
            <person name="Clermont O."/>
            <person name="Cruveiller S."/>
            <person name="Danchin A."/>
            <person name="Diard M."/>
            <person name="Dossat C."/>
            <person name="Karoui M.E."/>
            <person name="Frapy E."/>
            <person name="Garry L."/>
            <person name="Ghigo J.M."/>
            <person name="Gilles A.M."/>
            <person name="Johnson J."/>
            <person name="Le Bouguenec C."/>
            <person name="Lescat M."/>
            <person name="Mangenot S."/>
            <person name="Martinez-Jehanne V."/>
            <person name="Matic I."/>
            <person name="Nassif X."/>
            <person name="Oztas S."/>
            <person name="Petit M.A."/>
            <person name="Pichon C."/>
            <person name="Rouy Z."/>
            <person name="Ruf C.S."/>
            <person name="Schneider D."/>
            <person name="Tourret J."/>
            <person name="Vacherie B."/>
            <person name="Vallenet D."/>
            <person name="Medigue C."/>
            <person name="Rocha E.P.C."/>
            <person name="Denamur E."/>
        </authorList>
    </citation>
    <scope>NUCLEOTIDE SEQUENCE [LARGE SCALE GENOMIC DNA]</scope>
    <source>
        <strain>IAI1</strain>
    </source>
</reference>
<gene>
    <name evidence="1" type="primary">nikR</name>
    <name type="ordered locus">ECIAI1_3628</name>
</gene>
<comment type="function">
    <text evidence="1">Transcriptional repressor of the nikABCDE operon. Is active in the presence of excessive concentrations of intracellular nickel.</text>
</comment>
<comment type="cofactor">
    <cofactor evidence="1">
        <name>Ni(2+)</name>
        <dbReference type="ChEBI" id="CHEBI:49786"/>
    </cofactor>
    <text evidence="1">Binds 1 nickel ion per subunit.</text>
</comment>
<comment type="subunit">
    <text evidence="1">Homotetramer.</text>
</comment>
<comment type="similarity">
    <text evidence="1">Belongs to the transcriptional regulatory CopG/NikR family.</text>
</comment>
<name>NIKR_ECO8A</name>
<accession>B7M2P4</accession>
<sequence length="133" mass="15094">MQRVTITLDDDLLETLDSLSQRRGYNNRSEAIRDILRSALAQEATQQHGTQGFAVLSYVYEHEKRDLASRIVSTQHHHHDLSVATLHVHINHDDCLEIAVLKGDMGDVQHFADDVIAQRGVRHGHLQCLPKED</sequence>
<proteinExistence type="inferred from homology"/>
<protein>
    <recommendedName>
        <fullName evidence="1">Nickel-responsive regulator</fullName>
    </recommendedName>
</protein>
<dbReference type="EMBL" id="CU928160">
    <property type="protein sequence ID" value="CAR00426.1"/>
    <property type="molecule type" value="Genomic_DNA"/>
</dbReference>
<dbReference type="RefSeq" id="WP_001190062.1">
    <property type="nucleotide sequence ID" value="NC_011741.1"/>
</dbReference>
<dbReference type="SMR" id="B7M2P4"/>
<dbReference type="GeneID" id="93778510"/>
<dbReference type="KEGG" id="ecr:ECIAI1_3628"/>
<dbReference type="HOGENOM" id="CLU_113319_1_4_6"/>
<dbReference type="GO" id="GO:0003700">
    <property type="term" value="F:DNA-binding transcription factor activity"/>
    <property type="evidence" value="ECO:0007669"/>
    <property type="project" value="UniProtKB-UniRule"/>
</dbReference>
<dbReference type="GO" id="GO:0016151">
    <property type="term" value="F:nickel cation binding"/>
    <property type="evidence" value="ECO:0007669"/>
    <property type="project" value="UniProtKB-UniRule"/>
</dbReference>
<dbReference type="GO" id="GO:0043565">
    <property type="term" value="F:sequence-specific DNA binding"/>
    <property type="evidence" value="ECO:0007669"/>
    <property type="project" value="UniProtKB-ARBA"/>
</dbReference>
<dbReference type="GO" id="GO:0010045">
    <property type="term" value="P:response to nickel cation"/>
    <property type="evidence" value="ECO:0007669"/>
    <property type="project" value="InterPro"/>
</dbReference>
<dbReference type="CDD" id="cd22231">
    <property type="entry name" value="RHH_NikR_HicB-like"/>
    <property type="match status" value="1"/>
</dbReference>
<dbReference type="FunFam" id="1.10.1220.10:FF:000001">
    <property type="entry name" value="Nickel-responsive regulator"/>
    <property type="match status" value="1"/>
</dbReference>
<dbReference type="FunFam" id="3.30.70.1150:FF:000002">
    <property type="entry name" value="Nickel-responsive regulator"/>
    <property type="match status" value="1"/>
</dbReference>
<dbReference type="Gene3D" id="3.30.70.1150">
    <property type="entry name" value="ACT-like. Chain A, domain 2"/>
    <property type="match status" value="1"/>
</dbReference>
<dbReference type="Gene3D" id="1.10.1220.10">
    <property type="entry name" value="Met repressor-like"/>
    <property type="match status" value="1"/>
</dbReference>
<dbReference type="HAMAP" id="MF_00476">
    <property type="entry name" value="NikR"/>
    <property type="match status" value="1"/>
</dbReference>
<dbReference type="InterPro" id="IPR027271">
    <property type="entry name" value="Acetolactate_synth/TF_NikR_C"/>
</dbReference>
<dbReference type="InterPro" id="IPR045865">
    <property type="entry name" value="ACT-like_dom_sf"/>
</dbReference>
<dbReference type="InterPro" id="IPR013321">
    <property type="entry name" value="Arc_rbn_hlx_hlx"/>
</dbReference>
<dbReference type="InterPro" id="IPR002145">
    <property type="entry name" value="CopG"/>
</dbReference>
<dbReference type="InterPro" id="IPR050192">
    <property type="entry name" value="CopG/NikR_regulator"/>
</dbReference>
<dbReference type="InterPro" id="IPR022988">
    <property type="entry name" value="Ni_resp_reg_NikR"/>
</dbReference>
<dbReference type="InterPro" id="IPR014160">
    <property type="entry name" value="Nickel_NikR_proteobac"/>
</dbReference>
<dbReference type="InterPro" id="IPR010985">
    <property type="entry name" value="Ribbon_hlx_hlx"/>
</dbReference>
<dbReference type="InterPro" id="IPR014864">
    <property type="entry name" value="TF_NikR_Ni-bd_C"/>
</dbReference>
<dbReference type="NCBIfam" id="TIGR02793">
    <property type="entry name" value="nikR"/>
    <property type="match status" value="1"/>
</dbReference>
<dbReference type="NCBIfam" id="NF002815">
    <property type="entry name" value="PRK02967.1"/>
    <property type="match status" value="1"/>
</dbReference>
<dbReference type="NCBIfam" id="NF003381">
    <property type="entry name" value="PRK04460.1"/>
    <property type="match status" value="1"/>
</dbReference>
<dbReference type="PANTHER" id="PTHR34719">
    <property type="entry name" value="NICKEL-RESPONSIVE REGULATOR"/>
    <property type="match status" value="1"/>
</dbReference>
<dbReference type="PANTHER" id="PTHR34719:SF2">
    <property type="entry name" value="NICKEL-RESPONSIVE REGULATOR"/>
    <property type="match status" value="1"/>
</dbReference>
<dbReference type="Pfam" id="PF08753">
    <property type="entry name" value="NikR_C"/>
    <property type="match status" value="1"/>
</dbReference>
<dbReference type="Pfam" id="PF01402">
    <property type="entry name" value="RHH_1"/>
    <property type="match status" value="1"/>
</dbReference>
<dbReference type="SUPFAM" id="SSF55021">
    <property type="entry name" value="ACT-like"/>
    <property type="match status" value="1"/>
</dbReference>
<dbReference type="SUPFAM" id="SSF47598">
    <property type="entry name" value="Ribbon-helix-helix"/>
    <property type="match status" value="1"/>
</dbReference>
<feature type="chain" id="PRO_1000125819" description="Nickel-responsive regulator">
    <location>
        <begin position="1"/>
        <end position="133"/>
    </location>
</feature>
<feature type="binding site" evidence="1">
    <location>
        <position position="76"/>
    </location>
    <ligand>
        <name>Ni(2+)</name>
        <dbReference type="ChEBI" id="CHEBI:49786"/>
    </ligand>
</feature>
<feature type="binding site" evidence="1">
    <location>
        <position position="87"/>
    </location>
    <ligand>
        <name>Ni(2+)</name>
        <dbReference type="ChEBI" id="CHEBI:49786"/>
    </ligand>
</feature>
<feature type="binding site" evidence="1">
    <location>
        <position position="89"/>
    </location>
    <ligand>
        <name>Ni(2+)</name>
        <dbReference type="ChEBI" id="CHEBI:49786"/>
    </ligand>
</feature>
<feature type="binding site" evidence="1">
    <location>
        <position position="95"/>
    </location>
    <ligand>
        <name>Ni(2+)</name>
        <dbReference type="ChEBI" id="CHEBI:49786"/>
    </ligand>
</feature>
<evidence type="ECO:0000255" key="1">
    <source>
        <dbReference type="HAMAP-Rule" id="MF_00476"/>
    </source>
</evidence>
<keyword id="KW-0238">DNA-binding</keyword>
<keyword id="KW-0479">Metal-binding</keyword>
<keyword id="KW-0533">Nickel</keyword>
<keyword id="KW-0678">Repressor</keyword>
<keyword id="KW-0804">Transcription</keyword>
<keyword id="KW-0805">Transcription regulation</keyword>
<organism>
    <name type="scientific">Escherichia coli O8 (strain IAI1)</name>
    <dbReference type="NCBI Taxonomy" id="585034"/>
    <lineage>
        <taxon>Bacteria</taxon>
        <taxon>Pseudomonadati</taxon>
        <taxon>Pseudomonadota</taxon>
        <taxon>Gammaproteobacteria</taxon>
        <taxon>Enterobacterales</taxon>
        <taxon>Enterobacteriaceae</taxon>
        <taxon>Escherichia</taxon>
    </lineage>
</organism>